<feature type="chain" id="PRO_0000268656" description="Sigma non-opioid intracellular receptor 1">
    <location>
        <begin position="1"/>
        <end position="223"/>
    </location>
</feature>
<feature type="topological domain" description="Lumenal" evidence="4">
    <location>
        <begin position="1"/>
        <end position="9"/>
    </location>
</feature>
<feature type="transmembrane region" description="Helical" evidence="4">
    <location>
        <begin position="10"/>
        <end position="30"/>
    </location>
</feature>
<feature type="topological domain" description="Cytoplasmic" evidence="4">
    <location>
        <begin position="31"/>
        <end position="223"/>
    </location>
</feature>
<feature type="region of interest" description="Targeting to endoplasmic reticulum-associated lipid droplets" evidence="1">
    <location>
        <begin position="2"/>
        <end position="8"/>
    </location>
</feature>
<feature type="region of interest" description="Important for ligand-binding" evidence="3">
    <location>
        <begin position="99"/>
        <end position="106"/>
    </location>
</feature>
<feature type="region of interest" description="C-terminal hydrophobic region" evidence="6">
    <location>
        <begin position="177"/>
        <end position="223"/>
    </location>
</feature>
<feature type="site" description="Important for ligand binding" evidence="4">
    <location>
        <position position="126"/>
    </location>
</feature>
<feature type="site" description="Important for ligand binding" evidence="4">
    <location>
        <position position="172"/>
    </location>
</feature>
<comment type="function">
    <text evidence="1 4">Functions in lipid transport from the endoplasmic reticulum and is involved in a wide array of cellular functions probably through regulation of the biogenesis of lipid microdomains at the plasma membrane. Involved in the regulation of different receptors it plays a role in BDNF signaling and EGF signaling. Also regulates ion channels like the potassium channel and could modulate neurotransmitter release. Plays a role in calcium signaling through modulation together with ANK2 of the ITP3R-dependent calcium efflux at the endoplasmic reticulum. Plays a role in several other cell functions including proliferation, survival and death. Originally identified for its ability to bind various psychoactive drugs it is involved in learning processes, memory and mood alteration (By similarity). Necessary for proper mitochondrial axonal transport in motor neurons, in particular the retrograde movement of mitochondria. Plays a role in protecting cells against oxidative stress-induced cell death via its interaction with RNF112 (By similarity).</text>
</comment>
<comment type="subunit">
    <text evidence="1 4 5">Homotrimer. Forms a ternary complex with ANK2 and ITPR3. The complex is disrupted by agonists. Interacts with KCNA4. Interacts with KCNA2; cocaine consumption leads to increased interaction. Interacts with RNF112 in an oxidative stress-regulated manner.</text>
</comment>
<comment type="subcellular location">
    <subcellularLocation>
        <location evidence="4">Nucleus inner membrane</location>
    </subcellularLocation>
    <subcellularLocation>
        <location evidence="4">Nucleus outer membrane</location>
    </subcellularLocation>
    <subcellularLocation>
        <location evidence="4">Nucleus envelope</location>
    </subcellularLocation>
    <subcellularLocation>
        <location evidence="4">Cytoplasmic vesicle</location>
    </subcellularLocation>
    <subcellularLocation>
        <location evidence="4">Endoplasmic reticulum membrane</location>
    </subcellularLocation>
    <subcellularLocation>
        <location evidence="4">Membrane</location>
        <topology evidence="4">Single-pass membrane protein</topology>
    </subcellularLocation>
    <subcellularLocation>
        <location evidence="1">Lipid droplet</location>
    </subcellularLocation>
    <subcellularLocation>
        <location evidence="4">Cell junction</location>
    </subcellularLocation>
    <subcellularLocation>
        <location evidence="4">Cell membrane</location>
    </subcellularLocation>
    <subcellularLocation>
        <location evidence="4">Cell projection</location>
        <location evidence="4">Growth cone</location>
    </subcellularLocation>
    <subcellularLocation>
        <location evidence="4">Postsynaptic density membrane</location>
    </subcellularLocation>
    <text evidence="1 4">During interphase, detected at the inner and outer nuclear membrane and the endoplasmic reticulum. Detected on cytoplasmic vesicles during mitosis. Targeted to lipid droplets, cholesterol and galactosylceramide-enriched domains of the endoplasmic reticulum (By similarity). Enriched at cell-cell communication regions, growth cone and postsynaptic structures. Localization is modulated by ligand-binding. In motor neurons it is enriched at cholinergic postsynaptic densities (By similarity).</text>
</comment>
<comment type="domain">
    <text evidence="4">The C-terminal helices form a flat, hydrophobic surface that is probably tightly associated with the cytosolic surface of the endoplasmic reticulum membrane.</text>
</comment>
<comment type="miscellaneous">
    <text evidence="2">Sigma receptors are classified into two subtypes (Sigma-1 and Sigma-2) based on their different pharmacological profile.</text>
</comment>
<comment type="similarity">
    <text evidence="6">Belongs to the ERG2 family.</text>
</comment>
<organism>
    <name type="scientific">Trichosurus vulpecula</name>
    <name type="common">Brush-tailed possum</name>
    <dbReference type="NCBI Taxonomy" id="9337"/>
    <lineage>
        <taxon>Eukaryota</taxon>
        <taxon>Metazoa</taxon>
        <taxon>Chordata</taxon>
        <taxon>Craniata</taxon>
        <taxon>Vertebrata</taxon>
        <taxon>Euteleostomi</taxon>
        <taxon>Mammalia</taxon>
        <taxon>Metatheria</taxon>
        <taxon>Diprotodontia</taxon>
        <taxon>Phalangeridae</taxon>
        <taxon>Trichosurus</taxon>
    </lineage>
</organism>
<gene>
    <name type="primary">SIGMAR1</name>
    <name type="synonym">OPRS1</name>
</gene>
<reference key="1">
    <citation type="submission" date="2004-11" db="EMBL/GenBank/DDBJ databases">
        <title>Full-length Trichosurus vulpecula sigma-1 receptor cDNA.</title>
        <authorList>
            <person name="Hopkins B."/>
            <person name="Ravindran S."/>
        </authorList>
    </citation>
    <scope>NUCLEOTIDE SEQUENCE [MRNA]</scope>
</reference>
<name>SGMR1_TRIVU</name>
<keyword id="KW-0965">Cell junction</keyword>
<keyword id="KW-1003">Cell membrane</keyword>
<keyword id="KW-0966">Cell projection</keyword>
<keyword id="KW-0968">Cytoplasmic vesicle</keyword>
<keyword id="KW-0256">Endoplasmic reticulum</keyword>
<keyword id="KW-0551">Lipid droplet</keyword>
<keyword id="KW-0445">Lipid transport</keyword>
<keyword id="KW-0472">Membrane</keyword>
<keyword id="KW-0539">Nucleus</keyword>
<keyword id="KW-0628">Postsynaptic cell membrane</keyword>
<keyword id="KW-0675">Receptor</keyword>
<keyword id="KW-0770">Synapse</keyword>
<keyword id="KW-0812">Transmembrane</keyword>
<keyword id="KW-1133">Transmembrane helix</keyword>
<keyword id="KW-0813">Transport</keyword>
<accession>Q5PXE2</accession>
<sequence length="223" mass="25263">MQWAAGRRWAWITLFLTIVAVLIQAVWLWLGTQSFVFQREEIAQLARQYAGLDHELAFSRLIVELRRLHPGHVLPDEELQWVFVNAGGWMGAMCLLHASLSEYVLLFGTALGSHGHSGRYWAEISDTIISGTFHQWREGTTKSEVYYPGETVVHGPGEATAVEWGPNTWMVEYGRGVIPSTLAFALSDTIFSTQDFLTLFYTLRAYARGLRLELTTYLFGQDS</sequence>
<protein>
    <recommendedName>
        <fullName>Sigma non-opioid intracellular receptor 1</fullName>
    </recommendedName>
    <alternativeName>
        <fullName>Sigma 1-type opioid receptor</fullName>
        <shortName>Sigma1-receptor</shortName>
        <shortName>Sigma1R</shortName>
    </alternativeName>
</protein>
<proteinExistence type="evidence at transcript level"/>
<evidence type="ECO:0000250" key="1">
    <source>
        <dbReference type="UniProtKB" id="O55242"/>
    </source>
</evidence>
<evidence type="ECO:0000250" key="2">
    <source>
        <dbReference type="UniProtKB" id="Q5BJF2"/>
    </source>
</evidence>
<evidence type="ECO:0000250" key="3">
    <source>
        <dbReference type="UniProtKB" id="Q60492"/>
    </source>
</evidence>
<evidence type="ECO:0000250" key="4">
    <source>
        <dbReference type="UniProtKB" id="Q99720"/>
    </source>
</evidence>
<evidence type="ECO:0000250" key="5">
    <source>
        <dbReference type="UniProtKB" id="Q9R0C9"/>
    </source>
</evidence>
<evidence type="ECO:0000305" key="6"/>
<dbReference type="EMBL" id="AY823411">
    <property type="protein sequence ID" value="AAV71154.1"/>
    <property type="molecule type" value="mRNA"/>
</dbReference>
<dbReference type="SMR" id="Q5PXE2"/>
<dbReference type="GO" id="GO:0070161">
    <property type="term" value="C:anchoring junction"/>
    <property type="evidence" value="ECO:0007669"/>
    <property type="project" value="UniProtKB-SubCell"/>
</dbReference>
<dbReference type="GO" id="GO:0031410">
    <property type="term" value="C:cytoplasmic vesicle"/>
    <property type="evidence" value="ECO:0007669"/>
    <property type="project" value="UniProtKB-KW"/>
</dbReference>
<dbReference type="GO" id="GO:0005789">
    <property type="term" value="C:endoplasmic reticulum membrane"/>
    <property type="evidence" value="ECO:0007669"/>
    <property type="project" value="UniProtKB-SubCell"/>
</dbReference>
<dbReference type="GO" id="GO:0030426">
    <property type="term" value="C:growth cone"/>
    <property type="evidence" value="ECO:0007669"/>
    <property type="project" value="UniProtKB-SubCell"/>
</dbReference>
<dbReference type="GO" id="GO:0005811">
    <property type="term" value="C:lipid droplet"/>
    <property type="evidence" value="ECO:0007669"/>
    <property type="project" value="UniProtKB-SubCell"/>
</dbReference>
<dbReference type="GO" id="GO:0016020">
    <property type="term" value="C:membrane"/>
    <property type="evidence" value="ECO:0000250"/>
    <property type="project" value="UniProtKB"/>
</dbReference>
<dbReference type="GO" id="GO:0005637">
    <property type="term" value="C:nuclear inner membrane"/>
    <property type="evidence" value="ECO:0007669"/>
    <property type="project" value="UniProtKB-SubCell"/>
</dbReference>
<dbReference type="GO" id="GO:0005640">
    <property type="term" value="C:nuclear outer membrane"/>
    <property type="evidence" value="ECO:0007669"/>
    <property type="project" value="UniProtKB-SubCell"/>
</dbReference>
<dbReference type="GO" id="GO:0014069">
    <property type="term" value="C:postsynaptic density"/>
    <property type="evidence" value="ECO:0000250"/>
    <property type="project" value="UniProtKB"/>
</dbReference>
<dbReference type="GO" id="GO:0098839">
    <property type="term" value="C:postsynaptic density membrane"/>
    <property type="evidence" value="ECO:0007669"/>
    <property type="project" value="UniProtKB-SubCell"/>
</dbReference>
<dbReference type="GO" id="GO:0006869">
    <property type="term" value="P:lipid transport"/>
    <property type="evidence" value="ECO:0007669"/>
    <property type="project" value="UniProtKB-KW"/>
</dbReference>
<dbReference type="GO" id="GO:0043523">
    <property type="term" value="P:regulation of neuron apoptotic process"/>
    <property type="evidence" value="ECO:0000250"/>
    <property type="project" value="UniProtKB"/>
</dbReference>
<dbReference type="InterPro" id="IPR006716">
    <property type="entry name" value="ERG2_sigma1_rcpt-like"/>
</dbReference>
<dbReference type="PANTHER" id="PTHR10868">
    <property type="entry name" value="SIGMA 1-TYPE OPIOID RECEPTOR-RELATED"/>
    <property type="match status" value="1"/>
</dbReference>
<dbReference type="PANTHER" id="PTHR10868:SF1">
    <property type="entry name" value="SIGMA NON-OPIOID INTRACELLULAR RECEPTOR 1"/>
    <property type="match status" value="1"/>
</dbReference>
<dbReference type="Pfam" id="PF04622">
    <property type="entry name" value="ERG2_Sigma1R"/>
    <property type="match status" value="1"/>
</dbReference>